<comment type="function">
    <text evidence="1">This protein is a component of a D-methionine permease, a binding protein-dependent, ATP-driven transport system.</text>
</comment>
<comment type="subcellular location">
    <subcellularLocation>
        <location evidence="3">Cell membrane</location>
        <topology evidence="3">Lipid-anchor</topology>
    </subcellularLocation>
</comment>
<comment type="miscellaneous">
    <text evidence="1">The MetNIQ system is also to be able to transport the toxic methionine analog alpha-methyl-methionine.</text>
</comment>
<comment type="similarity">
    <text evidence="3">Belongs to the NlpA lipoprotein family.</text>
</comment>
<sequence length="271" mass="29466">MAFKFKTFAAVGALIGSLALAGCGQDEKDPNHIKVGVIVGAEQQVAEVAQKVAKEKYGLDVELVTFNDYVLPNEALSKGDIDANAFQHKPYLDQQIKDRGYKLVSVGKTFVYPIAGYSKKIKSLDELKDGSQVAVPNDPTNLGRSLLLLQKVGLIKLKDGVSLLPTSLDIVENPKNLKIVELEAPQLPRSLDDAQIALAVINTTYASQIGLTPAKDGIFVEDKDSPYVNLIVTREDNKDAENVKKFVQAYQSDEVYEAANKVFNGGAVKGW</sequence>
<proteinExistence type="inferred from homology"/>
<accession>Q8Z992</accession>
<dbReference type="EMBL" id="AL513382">
    <property type="protein sequence ID" value="CAD08705.1"/>
    <property type="molecule type" value="Genomic_DNA"/>
</dbReference>
<dbReference type="EMBL" id="AE014613">
    <property type="protein sequence ID" value="AAO67977.1"/>
    <property type="molecule type" value="Genomic_DNA"/>
</dbReference>
<dbReference type="RefSeq" id="NP_454854.1">
    <property type="nucleotide sequence ID" value="NC_003198.1"/>
</dbReference>
<dbReference type="RefSeq" id="WP_000874217.1">
    <property type="nucleotide sequence ID" value="NZ_WSUR01000065.1"/>
</dbReference>
<dbReference type="SMR" id="Q8Z992"/>
<dbReference type="STRING" id="220341.gene:17584303"/>
<dbReference type="KEGG" id="stt:t0248"/>
<dbReference type="KEGG" id="sty:STY0272"/>
<dbReference type="PATRIC" id="fig|220341.7.peg.273"/>
<dbReference type="eggNOG" id="COG1464">
    <property type="taxonomic scope" value="Bacteria"/>
</dbReference>
<dbReference type="HOGENOM" id="CLU_067080_0_0_6"/>
<dbReference type="OMA" id="DHKITRE"/>
<dbReference type="OrthoDB" id="9812878at2"/>
<dbReference type="Proteomes" id="UP000000541">
    <property type="component" value="Chromosome"/>
</dbReference>
<dbReference type="Proteomes" id="UP000002670">
    <property type="component" value="Chromosome"/>
</dbReference>
<dbReference type="GO" id="GO:0005886">
    <property type="term" value="C:plasma membrane"/>
    <property type="evidence" value="ECO:0007669"/>
    <property type="project" value="UniProtKB-SubCell"/>
</dbReference>
<dbReference type="GO" id="GO:0006865">
    <property type="term" value="P:amino acid transport"/>
    <property type="evidence" value="ECO:0007669"/>
    <property type="project" value="UniProtKB-KW"/>
</dbReference>
<dbReference type="CDD" id="cd13598">
    <property type="entry name" value="PBP2_lipoprotein_IlpA_like"/>
    <property type="match status" value="1"/>
</dbReference>
<dbReference type="FunFam" id="3.40.190.10:FF:000016">
    <property type="entry name" value="Lipoprotein"/>
    <property type="match status" value="1"/>
</dbReference>
<dbReference type="Gene3D" id="3.40.190.10">
    <property type="entry name" value="Periplasmic binding protein-like II"/>
    <property type="match status" value="2"/>
</dbReference>
<dbReference type="InterPro" id="IPR004872">
    <property type="entry name" value="Lipoprotein_NlpA"/>
</dbReference>
<dbReference type="NCBIfam" id="TIGR00363">
    <property type="entry name" value="MetQ/NlpA family lipoprotein"/>
    <property type="match status" value="1"/>
</dbReference>
<dbReference type="NCBIfam" id="NF008285">
    <property type="entry name" value="PRK11063.1"/>
    <property type="match status" value="1"/>
</dbReference>
<dbReference type="PANTHER" id="PTHR30429">
    <property type="entry name" value="D-METHIONINE-BINDING LIPOPROTEIN METQ"/>
    <property type="match status" value="1"/>
</dbReference>
<dbReference type="PANTHER" id="PTHR30429:SF1">
    <property type="entry name" value="D-METHIONINE-BINDING LIPOPROTEIN METQ-RELATED"/>
    <property type="match status" value="1"/>
</dbReference>
<dbReference type="Pfam" id="PF03180">
    <property type="entry name" value="Lipoprotein_9"/>
    <property type="match status" value="1"/>
</dbReference>
<dbReference type="PIRSF" id="PIRSF002854">
    <property type="entry name" value="MetQ"/>
    <property type="match status" value="1"/>
</dbReference>
<dbReference type="SUPFAM" id="SSF53850">
    <property type="entry name" value="Periplasmic binding protein-like II"/>
    <property type="match status" value="1"/>
</dbReference>
<dbReference type="PROSITE" id="PS51257">
    <property type="entry name" value="PROKAR_LIPOPROTEIN"/>
    <property type="match status" value="1"/>
</dbReference>
<reference key="1">
    <citation type="journal article" date="2001" name="Nature">
        <title>Complete genome sequence of a multiple drug resistant Salmonella enterica serovar Typhi CT18.</title>
        <authorList>
            <person name="Parkhill J."/>
            <person name="Dougan G."/>
            <person name="James K.D."/>
            <person name="Thomson N.R."/>
            <person name="Pickard D."/>
            <person name="Wain J."/>
            <person name="Churcher C.M."/>
            <person name="Mungall K.L."/>
            <person name="Bentley S.D."/>
            <person name="Holden M.T.G."/>
            <person name="Sebaihia M."/>
            <person name="Baker S."/>
            <person name="Basham D."/>
            <person name="Brooks K."/>
            <person name="Chillingworth T."/>
            <person name="Connerton P."/>
            <person name="Cronin A."/>
            <person name="Davis P."/>
            <person name="Davies R.M."/>
            <person name="Dowd L."/>
            <person name="White N."/>
            <person name="Farrar J."/>
            <person name="Feltwell T."/>
            <person name="Hamlin N."/>
            <person name="Haque A."/>
            <person name="Hien T.T."/>
            <person name="Holroyd S."/>
            <person name="Jagels K."/>
            <person name="Krogh A."/>
            <person name="Larsen T.S."/>
            <person name="Leather S."/>
            <person name="Moule S."/>
            <person name="O'Gaora P."/>
            <person name="Parry C."/>
            <person name="Quail M.A."/>
            <person name="Rutherford K.M."/>
            <person name="Simmonds M."/>
            <person name="Skelton J."/>
            <person name="Stevens K."/>
            <person name="Whitehead S."/>
            <person name="Barrell B.G."/>
        </authorList>
    </citation>
    <scope>NUCLEOTIDE SEQUENCE [LARGE SCALE GENOMIC DNA]</scope>
    <source>
        <strain>CT18</strain>
    </source>
</reference>
<reference key="2">
    <citation type="journal article" date="2003" name="J. Bacteriol.">
        <title>Comparative genomics of Salmonella enterica serovar Typhi strains Ty2 and CT18.</title>
        <authorList>
            <person name="Deng W."/>
            <person name="Liou S.-R."/>
            <person name="Plunkett G. III"/>
            <person name="Mayhew G.F."/>
            <person name="Rose D.J."/>
            <person name="Burland V."/>
            <person name="Kodoyianni V."/>
            <person name="Schwartz D.C."/>
            <person name="Blattner F.R."/>
        </authorList>
    </citation>
    <scope>NUCLEOTIDE SEQUENCE [LARGE SCALE GENOMIC DNA]</scope>
    <source>
        <strain>ATCC 700931 / Ty2</strain>
    </source>
</reference>
<keyword id="KW-0029">Amino-acid transport</keyword>
<keyword id="KW-1003">Cell membrane</keyword>
<keyword id="KW-0449">Lipoprotein</keyword>
<keyword id="KW-0472">Membrane</keyword>
<keyword id="KW-0564">Palmitate</keyword>
<keyword id="KW-0732">Signal</keyword>
<keyword id="KW-0813">Transport</keyword>
<name>METQ_SALTI</name>
<feature type="signal peptide" evidence="2">
    <location>
        <begin position="1"/>
        <end position="22"/>
    </location>
</feature>
<feature type="chain" id="PRO_0000019741" description="D-methionine-binding lipoprotein MetQ">
    <location>
        <begin position="23"/>
        <end position="271"/>
    </location>
</feature>
<feature type="lipid moiety-binding region" description="N-palmitoyl cysteine" evidence="2">
    <location>
        <position position="23"/>
    </location>
</feature>
<feature type="lipid moiety-binding region" description="S-diacylglycerol cysteine" evidence="2">
    <location>
        <position position="23"/>
    </location>
</feature>
<organism>
    <name type="scientific">Salmonella typhi</name>
    <dbReference type="NCBI Taxonomy" id="90370"/>
    <lineage>
        <taxon>Bacteria</taxon>
        <taxon>Pseudomonadati</taxon>
        <taxon>Pseudomonadota</taxon>
        <taxon>Gammaproteobacteria</taxon>
        <taxon>Enterobacterales</taxon>
        <taxon>Enterobacteriaceae</taxon>
        <taxon>Salmonella</taxon>
    </lineage>
</organism>
<evidence type="ECO:0000250" key="1"/>
<evidence type="ECO:0000255" key="2">
    <source>
        <dbReference type="PROSITE-ProRule" id="PRU00303"/>
    </source>
</evidence>
<evidence type="ECO:0000305" key="3"/>
<gene>
    <name type="primary">metQ</name>
    <name type="ordered locus">STY0272</name>
    <name type="ordered locus">t0248</name>
</gene>
<protein>
    <recommendedName>
        <fullName>D-methionine-binding lipoprotein MetQ</fullName>
    </recommendedName>
</protein>